<feature type="chain" id="PRO_0000151971" description="Leucine--tRNA ligase">
    <location>
        <begin position="1"/>
        <end position="804"/>
    </location>
</feature>
<feature type="short sequence motif" description="'HIGH' region">
    <location>
        <begin position="40"/>
        <end position="51"/>
    </location>
</feature>
<feature type="short sequence motif" description="'KMSKS' region">
    <location>
        <begin position="576"/>
        <end position="580"/>
    </location>
</feature>
<feature type="binding site" evidence="1">
    <location>
        <position position="579"/>
    </location>
    <ligand>
        <name>ATP</name>
        <dbReference type="ChEBI" id="CHEBI:30616"/>
    </ligand>
</feature>
<name>SYL_BACLD</name>
<evidence type="ECO:0000255" key="1">
    <source>
        <dbReference type="HAMAP-Rule" id="MF_00049"/>
    </source>
</evidence>
<gene>
    <name evidence="1" type="primary">leuS</name>
    <name type="ordered locus">BLi03175</name>
    <name type="ordered locus">BL00016</name>
</gene>
<protein>
    <recommendedName>
        <fullName evidence="1">Leucine--tRNA ligase</fullName>
        <ecNumber evidence="1">6.1.1.4</ecNumber>
    </recommendedName>
    <alternativeName>
        <fullName evidence="1">Leucyl-tRNA synthetase</fullName>
        <shortName evidence="1">LeuRS</shortName>
    </alternativeName>
</protein>
<sequence length="804" mass="91635">MSFDHQTIEKKWQDYWLKNKTFATREDKSKPKFYALDMFPYPSGAGLHVGHPEGYTATDILSRMKRMQGYNVLHPMGWDAFGLPAEQYALDTGNDPAVFTEQNIDNFRRQIRALGFSYDWDREVNTTDPDYYKWTQWIFLKLYEKGLAYVDEVPVNWCPALGTVLANEEVIDGKSERGGHPVERRPMKQWMLKITAYADRLLEDLEELDWPESIKEMQRNWIGRSEGAHVHFAVDGTNETFTVFTTRPDTLFGATYAVLAPEHDLVQKITTPEQKDAVNAYIEEVQSKSDLERTDLAKTKTGVFTGAYAVNPANGEKIPVWIADYVLATYGTGAVMAVPAHDERDHEFASAFGLPIKEVVKGGDVEKEAYTGDGEHIHSDFLNGLDKAAAIEKMIQWLEENGKGEKKVTYRLRDWLFSRQRYWGEPIPIIHWEDGTSTPVPEEELPLILPKTSEIKPSGTGESPLANIKEWVEVTDPETGKKGRRETNTMPQWAGSCWYFLRYIDPKNPNELASPEKLKEWLPVDMYIGGAEHAVLHLLYARFWHKFLYDIGVVPTKEPFKQLYNQGMILGENNEKMSKSKGNVVNPDEIVETHGADTLRLYEMFMGPLDASIAWSTTGLDGARRFLDRVWRLFIDDNGGLNEKIVEGAGETLERVYHETVMKVTDHFEGLRFNTGISQLMVFINEAYKADQLPKEYMEGFVKLLSPVAPHLAEELWNRLGHEETIAYEAWPVYDEAKLVDDEIEIVVQLNGKVKAKLNVPADADKEQLEELAKNNEKVKEQLEGKTIRKVIAVPGKLVNIVAN</sequence>
<organism>
    <name type="scientific">Bacillus licheniformis (strain ATCC 14580 / DSM 13 / JCM 2505 / CCUG 7422 / NBRC 12200 / NCIMB 9375 / NCTC 10341 / NRRL NRS-1264 / Gibson 46)</name>
    <dbReference type="NCBI Taxonomy" id="279010"/>
    <lineage>
        <taxon>Bacteria</taxon>
        <taxon>Bacillati</taxon>
        <taxon>Bacillota</taxon>
        <taxon>Bacilli</taxon>
        <taxon>Bacillales</taxon>
        <taxon>Bacillaceae</taxon>
        <taxon>Bacillus</taxon>
    </lineage>
</organism>
<comment type="catalytic activity">
    <reaction evidence="1">
        <text>tRNA(Leu) + L-leucine + ATP = L-leucyl-tRNA(Leu) + AMP + diphosphate</text>
        <dbReference type="Rhea" id="RHEA:11688"/>
        <dbReference type="Rhea" id="RHEA-COMP:9613"/>
        <dbReference type="Rhea" id="RHEA-COMP:9622"/>
        <dbReference type="ChEBI" id="CHEBI:30616"/>
        <dbReference type="ChEBI" id="CHEBI:33019"/>
        <dbReference type="ChEBI" id="CHEBI:57427"/>
        <dbReference type="ChEBI" id="CHEBI:78442"/>
        <dbReference type="ChEBI" id="CHEBI:78494"/>
        <dbReference type="ChEBI" id="CHEBI:456215"/>
        <dbReference type="EC" id="6.1.1.4"/>
    </reaction>
</comment>
<comment type="subcellular location">
    <subcellularLocation>
        <location evidence="1">Cytoplasm</location>
    </subcellularLocation>
</comment>
<comment type="similarity">
    <text evidence="1">Belongs to the class-I aminoacyl-tRNA synthetase family.</text>
</comment>
<reference key="1">
    <citation type="journal article" date="2004" name="J. Mol. Microbiol. Biotechnol.">
        <title>The complete genome sequence of Bacillus licheniformis DSM13, an organism with great industrial potential.</title>
        <authorList>
            <person name="Veith B."/>
            <person name="Herzberg C."/>
            <person name="Steckel S."/>
            <person name="Feesche J."/>
            <person name="Maurer K.H."/>
            <person name="Ehrenreich P."/>
            <person name="Baeumer S."/>
            <person name="Henne A."/>
            <person name="Liesegang H."/>
            <person name="Merkl R."/>
            <person name="Ehrenreich A."/>
            <person name="Gottschalk G."/>
        </authorList>
    </citation>
    <scope>NUCLEOTIDE SEQUENCE [LARGE SCALE GENOMIC DNA]</scope>
    <source>
        <strain>ATCC 14580 / DSM 13 / JCM 2505 / CCUG 7422 / NBRC 12200 / NCIMB 9375 / NCTC 10341 / NRRL NRS-1264 / Gibson 46</strain>
    </source>
</reference>
<reference key="2">
    <citation type="journal article" date="2004" name="Genome Biol.">
        <title>Complete genome sequence of the industrial bacterium Bacillus licheniformis and comparisons with closely related Bacillus species.</title>
        <authorList>
            <person name="Rey M.W."/>
            <person name="Ramaiya P."/>
            <person name="Nelson B.A."/>
            <person name="Brody-Karpin S.D."/>
            <person name="Zaretsky E.J."/>
            <person name="Tang M."/>
            <person name="Lopez de Leon A."/>
            <person name="Xiang H."/>
            <person name="Gusti V."/>
            <person name="Clausen I.G."/>
            <person name="Olsen P.B."/>
            <person name="Rasmussen M.D."/>
            <person name="Andersen J.T."/>
            <person name="Joergensen P.L."/>
            <person name="Larsen T.S."/>
            <person name="Sorokin A."/>
            <person name="Bolotin A."/>
            <person name="Lapidus A."/>
            <person name="Galleron N."/>
            <person name="Ehrlich S.D."/>
            <person name="Berka R.M."/>
        </authorList>
    </citation>
    <scope>NUCLEOTIDE SEQUENCE [LARGE SCALE GENOMIC DNA]</scope>
    <source>
        <strain>ATCC 14580 / DSM 13 / JCM 2505 / CCUG 7422 / NBRC 12200 / NCIMB 9375 / NCTC 10341 / NRRL NRS-1264 / Gibson 46</strain>
    </source>
</reference>
<dbReference type="EC" id="6.1.1.4" evidence="1"/>
<dbReference type="EMBL" id="AE017333">
    <property type="protein sequence ID" value="AAU42036.1"/>
    <property type="molecule type" value="Genomic_DNA"/>
</dbReference>
<dbReference type="EMBL" id="CP000002">
    <property type="protein sequence ID" value="AAU24674.1"/>
    <property type="molecule type" value="Genomic_DNA"/>
</dbReference>
<dbReference type="RefSeq" id="WP_003184546.1">
    <property type="nucleotide sequence ID" value="NC_006322.1"/>
</dbReference>
<dbReference type="SMR" id="Q65FX8"/>
<dbReference type="STRING" id="279010.BL00016"/>
<dbReference type="GeneID" id="92860235"/>
<dbReference type="KEGG" id="bld:BLi03175"/>
<dbReference type="KEGG" id="bli:BL00016"/>
<dbReference type="eggNOG" id="COG0495">
    <property type="taxonomic scope" value="Bacteria"/>
</dbReference>
<dbReference type="HOGENOM" id="CLU_004427_0_0_9"/>
<dbReference type="Proteomes" id="UP000000606">
    <property type="component" value="Chromosome"/>
</dbReference>
<dbReference type="GO" id="GO:0005829">
    <property type="term" value="C:cytosol"/>
    <property type="evidence" value="ECO:0007669"/>
    <property type="project" value="TreeGrafter"/>
</dbReference>
<dbReference type="GO" id="GO:0002161">
    <property type="term" value="F:aminoacyl-tRNA deacylase activity"/>
    <property type="evidence" value="ECO:0007669"/>
    <property type="project" value="InterPro"/>
</dbReference>
<dbReference type="GO" id="GO:0005524">
    <property type="term" value="F:ATP binding"/>
    <property type="evidence" value="ECO:0007669"/>
    <property type="project" value="UniProtKB-UniRule"/>
</dbReference>
<dbReference type="GO" id="GO:0004823">
    <property type="term" value="F:leucine-tRNA ligase activity"/>
    <property type="evidence" value="ECO:0007669"/>
    <property type="project" value="UniProtKB-UniRule"/>
</dbReference>
<dbReference type="GO" id="GO:0006429">
    <property type="term" value="P:leucyl-tRNA aminoacylation"/>
    <property type="evidence" value="ECO:0007669"/>
    <property type="project" value="UniProtKB-UniRule"/>
</dbReference>
<dbReference type="CDD" id="cd07958">
    <property type="entry name" value="Anticodon_Ia_Leu_BEm"/>
    <property type="match status" value="1"/>
</dbReference>
<dbReference type="CDD" id="cd00812">
    <property type="entry name" value="LeuRS_core"/>
    <property type="match status" value="1"/>
</dbReference>
<dbReference type="FunFam" id="3.10.20.590:FF:000001">
    <property type="entry name" value="Leucine--tRNA ligase"/>
    <property type="match status" value="1"/>
</dbReference>
<dbReference type="FunFam" id="3.40.50.620:FF:000056">
    <property type="entry name" value="Leucine--tRNA ligase"/>
    <property type="match status" value="1"/>
</dbReference>
<dbReference type="FunFam" id="3.40.50.620:FF:000077">
    <property type="entry name" value="Leucine--tRNA ligase"/>
    <property type="match status" value="1"/>
</dbReference>
<dbReference type="FunFam" id="1.10.730.10:FF:000011">
    <property type="entry name" value="Leucine--tRNA ligase chloroplastic/mitochondrial"/>
    <property type="match status" value="1"/>
</dbReference>
<dbReference type="Gene3D" id="3.10.20.590">
    <property type="match status" value="1"/>
</dbReference>
<dbReference type="Gene3D" id="3.40.50.620">
    <property type="entry name" value="HUPs"/>
    <property type="match status" value="2"/>
</dbReference>
<dbReference type="Gene3D" id="1.10.730.10">
    <property type="entry name" value="Isoleucyl-tRNA Synthetase, Domain 1"/>
    <property type="match status" value="1"/>
</dbReference>
<dbReference type="Gene3D" id="3.90.740.10">
    <property type="entry name" value="Valyl/Leucyl/Isoleucyl-tRNA synthetase, editing domain"/>
    <property type="match status" value="1"/>
</dbReference>
<dbReference type="HAMAP" id="MF_00049_B">
    <property type="entry name" value="Leu_tRNA_synth_B"/>
    <property type="match status" value="1"/>
</dbReference>
<dbReference type="InterPro" id="IPR001412">
    <property type="entry name" value="aa-tRNA-synth_I_CS"/>
</dbReference>
<dbReference type="InterPro" id="IPR002302">
    <property type="entry name" value="Leu-tRNA-ligase"/>
</dbReference>
<dbReference type="InterPro" id="IPR025709">
    <property type="entry name" value="Leu_tRNA-synth_edit"/>
</dbReference>
<dbReference type="InterPro" id="IPR013155">
    <property type="entry name" value="M/V/L/I-tRNA-synth_anticd-bd"/>
</dbReference>
<dbReference type="InterPro" id="IPR015413">
    <property type="entry name" value="Methionyl/Leucyl_tRNA_Synth"/>
</dbReference>
<dbReference type="InterPro" id="IPR014729">
    <property type="entry name" value="Rossmann-like_a/b/a_fold"/>
</dbReference>
<dbReference type="InterPro" id="IPR009080">
    <property type="entry name" value="tRNAsynth_Ia_anticodon-bd"/>
</dbReference>
<dbReference type="InterPro" id="IPR009008">
    <property type="entry name" value="Val/Leu/Ile-tRNA-synth_edit"/>
</dbReference>
<dbReference type="NCBIfam" id="TIGR00396">
    <property type="entry name" value="leuS_bact"/>
    <property type="match status" value="1"/>
</dbReference>
<dbReference type="PANTHER" id="PTHR43740:SF2">
    <property type="entry name" value="LEUCINE--TRNA LIGASE, MITOCHONDRIAL"/>
    <property type="match status" value="1"/>
</dbReference>
<dbReference type="PANTHER" id="PTHR43740">
    <property type="entry name" value="LEUCYL-TRNA SYNTHETASE"/>
    <property type="match status" value="1"/>
</dbReference>
<dbReference type="Pfam" id="PF08264">
    <property type="entry name" value="Anticodon_1"/>
    <property type="match status" value="1"/>
</dbReference>
<dbReference type="Pfam" id="PF13603">
    <property type="entry name" value="tRNA-synt_1_2"/>
    <property type="match status" value="1"/>
</dbReference>
<dbReference type="Pfam" id="PF09334">
    <property type="entry name" value="tRNA-synt_1g"/>
    <property type="match status" value="2"/>
</dbReference>
<dbReference type="PRINTS" id="PR00985">
    <property type="entry name" value="TRNASYNTHLEU"/>
</dbReference>
<dbReference type="SUPFAM" id="SSF47323">
    <property type="entry name" value="Anticodon-binding domain of a subclass of class I aminoacyl-tRNA synthetases"/>
    <property type="match status" value="1"/>
</dbReference>
<dbReference type="SUPFAM" id="SSF52374">
    <property type="entry name" value="Nucleotidylyl transferase"/>
    <property type="match status" value="1"/>
</dbReference>
<dbReference type="SUPFAM" id="SSF50677">
    <property type="entry name" value="ValRS/IleRS/LeuRS editing domain"/>
    <property type="match status" value="1"/>
</dbReference>
<dbReference type="PROSITE" id="PS00178">
    <property type="entry name" value="AA_TRNA_LIGASE_I"/>
    <property type="match status" value="1"/>
</dbReference>
<proteinExistence type="inferred from homology"/>
<keyword id="KW-0030">Aminoacyl-tRNA synthetase</keyword>
<keyword id="KW-0067">ATP-binding</keyword>
<keyword id="KW-0963">Cytoplasm</keyword>
<keyword id="KW-0436">Ligase</keyword>
<keyword id="KW-0547">Nucleotide-binding</keyword>
<keyword id="KW-0648">Protein biosynthesis</keyword>
<keyword id="KW-1185">Reference proteome</keyword>
<accession>Q65FX8</accession>
<accession>Q62RD6</accession>